<reference key="1">
    <citation type="journal article" date="2008" name="PLoS Genet.">
        <title>Genomic islands in the pathogenic filamentous fungus Aspergillus fumigatus.</title>
        <authorList>
            <person name="Fedorova N.D."/>
            <person name="Khaldi N."/>
            <person name="Joardar V.S."/>
            <person name="Maiti R."/>
            <person name="Amedeo P."/>
            <person name="Anderson M.J."/>
            <person name="Crabtree J."/>
            <person name="Silva J.C."/>
            <person name="Badger J.H."/>
            <person name="Albarraq A."/>
            <person name="Angiuoli S."/>
            <person name="Bussey H."/>
            <person name="Bowyer P."/>
            <person name="Cotty P.J."/>
            <person name="Dyer P.S."/>
            <person name="Egan A."/>
            <person name="Galens K."/>
            <person name="Fraser-Liggett C.M."/>
            <person name="Haas B.J."/>
            <person name="Inman J.M."/>
            <person name="Kent R."/>
            <person name="Lemieux S."/>
            <person name="Malavazi I."/>
            <person name="Orvis J."/>
            <person name="Roemer T."/>
            <person name="Ronning C.M."/>
            <person name="Sundaram J.P."/>
            <person name="Sutton G."/>
            <person name="Turner G."/>
            <person name="Venter J.C."/>
            <person name="White O.R."/>
            <person name="Whitty B.R."/>
            <person name="Youngman P."/>
            <person name="Wolfe K.H."/>
            <person name="Goldman G.H."/>
            <person name="Wortman J.R."/>
            <person name="Jiang B."/>
            <person name="Denning D.W."/>
            <person name="Nierman W.C."/>
        </authorList>
    </citation>
    <scope>NUCLEOTIDE SEQUENCE [LARGE SCALE GENOMIC DNA]</scope>
    <source>
        <strain>ATCC 1007 / CBS 513.65 / DSM 816 / NCTC 3887 / NRRL 1 / QM 1276 / 107</strain>
    </source>
</reference>
<evidence type="ECO:0000250" key="1"/>
<evidence type="ECO:0000255" key="2"/>
<evidence type="ECO:0000255" key="3">
    <source>
        <dbReference type="PROSITE-ProRule" id="PRU00192"/>
    </source>
</evidence>
<evidence type="ECO:0000256" key="4">
    <source>
        <dbReference type="SAM" id="MobiDB-lite"/>
    </source>
</evidence>
<evidence type="ECO:0000305" key="5"/>
<accession>A1CAL7</accession>
<comment type="function">
    <text evidence="1">Plasma membrane osmosensor that activates the high osmolarity glycerol (HOG) MAPK signaling pathway in response to high osmolarity.</text>
</comment>
<comment type="subunit">
    <text evidence="1">Forms homooligomers.</text>
</comment>
<comment type="subcellular location">
    <subcellularLocation>
        <location evidence="1">Cell membrane</location>
        <topology evidence="1">Multi-pass membrane protein</topology>
    </subcellularLocation>
</comment>
<comment type="similarity">
    <text evidence="5">Belongs to the SHO1 family.</text>
</comment>
<dbReference type="EMBL" id="DS027049">
    <property type="protein sequence ID" value="EAW12785.1"/>
    <property type="molecule type" value="Genomic_DNA"/>
</dbReference>
<dbReference type="RefSeq" id="XP_001274211.1">
    <property type="nucleotide sequence ID" value="XM_001274210.1"/>
</dbReference>
<dbReference type="SMR" id="A1CAL7"/>
<dbReference type="STRING" id="344612.A1CAL7"/>
<dbReference type="GlyCosmos" id="A1CAL7">
    <property type="glycosylation" value="1 site, No reported glycans"/>
</dbReference>
<dbReference type="EnsemblFungi" id="EAW12785">
    <property type="protein sequence ID" value="EAW12785"/>
    <property type="gene ID" value="ACLA_012130"/>
</dbReference>
<dbReference type="GeneID" id="4706489"/>
<dbReference type="KEGG" id="act:ACLA_012130"/>
<dbReference type="VEuPathDB" id="FungiDB:ACLA_012130"/>
<dbReference type="eggNOG" id="ENOG502QW7A">
    <property type="taxonomic scope" value="Eukaryota"/>
</dbReference>
<dbReference type="HOGENOM" id="CLU_043316_1_0_1"/>
<dbReference type="OMA" id="NIVWIFY"/>
<dbReference type="OrthoDB" id="5983572at2759"/>
<dbReference type="Proteomes" id="UP000006701">
    <property type="component" value="Unassembled WGS sequence"/>
</dbReference>
<dbReference type="GO" id="GO:0005886">
    <property type="term" value="C:plasma membrane"/>
    <property type="evidence" value="ECO:0007669"/>
    <property type="project" value="UniProtKB-SubCell"/>
</dbReference>
<dbReference type="CDD" id="cd11855">
    <property type="entry name" value="SH3_Sho1p"/>
    <property type="match status" value="1"/>
</dbReference>
<dbReference type="FunFam" id="2.30.30.40:FF:000213">
    <property type="entry name" value="High osmolarity signaling protein SHO1"/>
    <property type="match status" value="1"/>
</dbReference>
<dbReference type="Gene3D" id="2.30.30.40">
    <property type="entry name" value="SH3 Domains"/>
    <property type="match status" value="1"/>
</dbReference>
<dbReference type="InterPro" id="IPR036028">
    <property type="entry name" value="SH3-like_dom_sf"/>
</dbReference>
<dbReference type="InterPro" id="IPR001452">
    <property type="entry name" value="SH3_domain"/>
</dbReference>
<dbReference type="InterPro" id="IPR035522">
    <property type="entry name" value="Sho1_SH3"/>
</dbReference>
<dbReference type="Pfam" id="PF00018">
    <property type="entry name" value="SH3_1"/>
    <property type="match status" value="1"/>
</dbReference>
<dbReference type="PRINTS" id="PR00452">
    <property type="entry name" value="SH3DOMAIN"/>
</dbReference>
<dbReference type="SMART" id="SM00326">
    <property type="entry name" value="SH3"/>
    <property type="match status" value="1"/>
</dbReference>
<dbReference type="SUPFAM" id="SSF50044">
    <property type="entry name" value="SH3-domain"/>
    <property type="match status" value="1"/>
</dbReference>
<dbReference type="PROSITE" id="PS50002">
    <property type="entry name" value="SH3"/>
    <property type="match status" value="1"/>
</dbReference>
<proteinExistence type="inferred from homology"/>
<keyword id="KW-1003">Cell membrane</keyword>
<keyword id="KW-0325">Glycoprotein</keyword>
<keyword id="KW-0472">Membrane</keyword>
<keyword id="KW-1185">Reference proteome</keyword>
<keyword id="KW-0728">SH3 domain</keyword>
<keyword id="KW-0346">Stress response</keyword>
<keyword id="KW-0812">Transmembrane</keyword>
<keyword id="KW-1133">Transmembrane helix</keyword>
<name>SHO1_ASPCL</name>
<feature type="chain" id="PRO_0000410358" description="High osmolarity signaling protein sho1">
    <location>
        <begin position="1"/>
        <end position="292"/>
    </location>
</feature>
<feature type="topological domain" description="Cytoplasmic" evidence="2">
    <location>
        <begin position="1"/>
        <end position="14"/>
    </location>
</feature>
<feature type="transmembrane region" description="Helical" evidence="2">
    <location>
        <begin position="15"/>
        <end position="35"/>
    </location>
</feature>
<feature type="topological domain" description="Extracellular" evidence="2">
    <location>
        <begin position="36"/>
        <end position="46"/>
    </location>
</feature>
<feature type="transmembrane region" description="Helical" evidence="2">
    <location>
        <begin position="47"/>
        <end position="67"/>
    </location>
</feature>
<feature type="topological domain" description="Cytoplasmic" evidence="2">
    <location>
        <begin position="68"/>
        <end position="69"/>
    </location>
</feature>
<feature type="transmembrane region" description="Helical" evidence="2">
    <location>
        <begin position="70"/>
        <end position="90"/>
    </location>
</feature>
<feature type="topological domain" description="Extracellular" evidence="2">
    <location>
        <begin position="91"/>
        <end position="104"/>
    </location>
</feature>
<feature type="transmembrane region" description="Helical" evidence="2">
    <location>
        <begin position="105"/>
        <end position="125"/>
    </location>
</feature>
<feature type="topological domain" description="Cytoplasmic" evidence="2">
    <location>
        <begin position="126"/>
        <end position="292"/>
    </location>
</feature>
<feature type="domain" description="SH3" evidence="3">
    <location>
        <begin position="233"/>
        <end position="292"/>
    </location>
</feature>
<feature type="region of interest" description="Disordered" evidence="4">
    <location>
        <begin position="185"/>
        <end position="231"/>
    </location>
</feature>
<feature type="compositionally biased region" description="Low complexity" evidence="4">
    <location>
        <begin position="209"/>
        <end position="222"/>
    </location>
</feature>
<feature type="glycosylation site" description="N-linked (GlcNAc...) asparagine" evidence="2">
    <location>
        <position position="100"/>
    </location>
</feature>
<gene>
    <name type="primary">sho1</name>
    <name type="ORF">ACLA_012130</name>
</gene>
<sequence>MARFRASNILGDPFALATISIAILAWIIAFISSIIANIKMADYPNHAWWAIAYMFCCTIGVTVVVGSDTGLVYGVAVVGYLSAGLVLTSLSVNTLVYKGNSSAQAAAAGFILLSMIIIVWIFYFGSTPQATHRGFIDSFALNKEGGNAYGNGRPISTAFGHRPETTSTSAPQMYTSAQLNGFETSSPISGYPGGAPGSENRSSSQPRFGNPSASNLPANNNGQSQDEVPQPTEYPYRAKAIYSYDANPEDANEISFSKHEILEVSDVSGRWWQARKSSGETGIAPSNYLILL</sequence>
<protein>
    <recommendedName>
        <fullName>High osmolarity signaling protein sho1</fullName>
    </recommendedName>
    <alternativeName>
        <fullName>Osmosensor sho1</fullName>
    </alternativeName>
</protein>
<organism>
    <name type="scientific">Aspergillus clavatus (strain ATCC 1007 / CBS 513.65 / DSM 816 / NCTC 3887 / NRRL 1 / QM 1276 / 107)</name>
    <dbReference type="NCBI Taxonomy" id="344612"/>
    <lineage>
        <taxon>Eukaryota</taxon>
        <taxon>Fungi</taxon>
        <taxon>Dikarya</taxon>
        <taxon>Ascomycota</taxon>
        <taxon>Pezizomycotina</taxon>
        <taxon>Eurotiomycetes</taxon>
        <taxon>Eurotiomycetidae</taxon>
        <taxon>Eurotiales</taxon>
        <taxon>Aspergillaceae</taxon>
        <taxon>Aspergillus</taxon>
        <taxon>Aspergillus subgen. Fumigati</taxon>
    </lineage>
</organism>